<dbReference type="EC" id="3.6.1.-" evidence="2"/>
<dbReference type="EC" id="3.6.1.22" evidence="4"/>
<dbReference type="EMBL" id="Z72589">
    <property type="protein sequence ID" value="CAA96771.1"/>
    <property type="molecule type" value="Genomic_DNA"/>
</dbReference>
<dbReference type="EMBL" id="AY693188">
    <property type="protein sequence ID" value="AAT93207.1"/>
    <property type="molecule type" value="Genomic_DNA"/>
</dbReference>
<dbReference type="EMBL" id="BK006941">
    <property type="protein sequence ID" value="DAA08035.1"/>
    <property type="molecule type" value="Genomic_DNA"/>
</dbReference>
<dbReference type="PIR" id="S64074">
    <property type="entry name" value="S64074"/>
</dbReference>
<dbReference type="RefSeq" id="NP_011448.3">
    <property type="nucleotide sequence ID" value="NM_001180932.3"/>
</dbReference>
<dbReference type="SMR" id="P53164"/>
<dbReference type="BioGRID" id="33180">
    <property type="interactions" value="97"/>
</dbReference>
<dbReference type="FunCoup" id="P53164">
    <property type="interactions" value="130"/>
</dbReference>
<dbReference type="IntAct" id="P53164">
    <property type="interactions" value="1"/>
</dbReference>
<dbReference type="MINT" id="P53164"/>
<dbReference type="STRING" id="4932.YGL067W"/>
<dbReference type="PaxDb" id="4932-YGL067W"/>
<dbReference type="PeptideAtlas" id="P53164"/>
<dbReference type="EnsemblFungi" id="YGL067W_mRNA">
    <property type="protein sequence ID" value="YGL067W"/>
    <property type="gene ID" value="YGL067W"/>
</dbReference>
<dbReference type="GeneID" id="852813"/>
<dbReference type="KEGG" id="sce:YGL067W"/>
<dbReference type="AGR" id="SGD:S000003035"/>
<dbReference type="SGD" id="S000003035">
    <property type="gene designation" value="NPY1"/>
</dbReference>
<dbReference type="VEuPathDB" id="FungiDB:YGL067W"/>
<dbReference type="eggNOG" id="KOG3084">
    <property type="taxonomic scope" value="Eukaryota"/>
</dbReference>
<dbReference type="GeneTree" id="ENSGT00940000157592"/>
<dbReference type="HOGENOM" id="CLU_037162_0_2_1"/>
<dbReference type="InParanoid" id="P53164"/>
<dbReference type="OMA" id="YSHAKMY"/>
<dbReference type="OrthoDB" id="10249612at2759"/>
<dbReference type="BioCyc" id="YEAST:YGL067W-MONOMER"/>
<dbReference type="BRENDA" id="3.6.1.22">
    <property type="organism ID" value="984"/>
</dbReference>
<dbReference type="Reactome" id="R-SCE-197264">
    <property type="pathway name" value="Nicotinamide salvaging"/>
</dbReference>
<dbReference type="BioGRID-ORCS" id="852813">
    <property type="hits" value="0 hits in 10 CRISPR screens"/>
</dbReference>
<dbReference type="PRO" id="PR:P53164"/>
<dbReference type="Proteomes" id="UP000002311">
    <property type="component" value="Chromosome VII"/>
</dbReference>
<dbReference type="RNAct" id="P53164">
    <property type="molecule type" value="protein"/>
</dbReference>
<dbReference type="GO" id="GO:0005737">
    <property type="term" value="C:cytoplasm"/>
    <property type="evidence" value="ECO:0007005"/>
    <property type="project" value="SGD"/>
</dbReference>
<dbReference type="GO" id="GO:0005829">
    <property type="term" value="C:cytosol"/>
    <property type="evidence" value="ECO:0007005"/>
    <property type="project" value="SGD"/>
</dbReference>
<dbReference type="GO" id="GO:0005777">
    <property type="term" value="C:peroxisome"/>
    <property type="evidence" value="ECO:0000314"/>
    <property type="project" value="SGD"/>
</dbReference>
<dbReference type="GO" id="GO:0046872">
    <property type="term" value="F:metal ion binding"/>
    <property type="evidence" value="ECO:0007669"/>
    <property type="project" value="UniProtKB-KW"/>
</dbReference>
<dbReference type="GO" id="GO:0000210">
    <property type="term" value="F:NAD+ diphosphatase activity"/>
    <property type="evidence" value="ECO:0000314"/>
    <property type="project" value="SGD"/>
</dbReference>
<dbReference type="GO" id="GO:0035529">
    <property type="term" value="F:NADH pyrophosphatase activity"/>
    <property type="evidence" value="ECO:0000318"/>
    <property type="project" value="GO_Central"/>
</dbReference>
<dbReference type="GO" id="GO:0110153">
    <property type="term" value="F:RNA NAD-cap (NMN-forming) hydrolase activity"/>
    <property type="evidence" value="ECO:0007669"/>
    <property type="project" value="RHEA"/>
</dbReference>
<dbReference type="GO" id="GO:0019677">
    <property type="term" value="P:NAD catabolic process"/>
    <property type="evidence" value="ECO:0000318"/>
    <property type="project" value="GO_Central"/>
</dbReference>
<dbReference type="GO" id="GO:0110155">
    <property type="term" value="P:NAD-cap decapping"/>
    <property type="evidence" value="ECO:0000315"/>
    <property type="project" value="SGD"/>
</dbReference>
<dbReference type="GO" id="GO:0006734">
    <property type="term" value="P:NADH metabolic process"/>
    <property type="evidence" value="ECO:0000314"/>
    <property type="project" value="SGD"/>
</dbReference>
<dbReference type="GO" id="GO:0006742">
    <property type="term" value="P:NADP catabolic process"/>
    <property type="evidence" value="ECO:0000318"/>
    <property type="project" value="GO_Central"/>
</dbReference>
<dbReference type="GO" id="GO:0110154">
    <property type="term" value="P:RNA decapping"/>
    <property type="evidence" value="ECO:0000315"/>
    <property type="project" value="SGD"/>
</dbReference>
<dbReference type="CDD" id="cd03429">
    <property type="entry name" value="NUDIX_NADH_pyrophosphatase_Nudt13"/>
    <property type="match status" value="1"/>
</dbReference>
<dbReference type="FunFam" id="3.90.79.10:FF:000095">
    <property type="entry name" value="NADH pyrophosphatase"/>
    <property type="match status" value="1"/>
</dbReference>
<dbReference type="FunFam" id="3.90.79.20:FF:000011">
    <property type="entry name" value="NADH pyrophosphatase"/>
    <property type="match status" value="1"/>
</dbReference>
<dbReference type="Gene3D" id="3.90.79.20">
    <property type="match status" value="1"/>
</dbReference>
<dbReference type="Gene3D" id="3.90.79.10">
    <property type="entry name" value="Nucleoside Triphosphate Pyrophosphohydrolase"/>
    <property type="match status" value="1"/>
</dbReference>
<dbReference type="InterPro" id="IPR050241">
    <property type="entry name" value="NAD-cap_RNA_hydrolase_NudC"/>
</dbReference>
<dbReference type="InterPro" id="IPR049734">
    <property type="entry name" value="NudC-like_C"/>
</dbReference>
<dbReference type="InterPro" id="IPR015797">
    <property type="entry name" value="NUDIX_hydrolase-like_dom_sf"/>
</dbReference>
<dbReference type="InterPro" id="IPR020084">
    <property type="entry name" value="NUDIX_hydrolase_CS"/>
</dbReference>
<dbReference type="InterPro" id="IPR000086">
    <property type="entry name" value="NUDIX_hydrolase_dom"/>
</dbReference>
<dbReference type="InterPro" id="IPR015376">
    <property type="entry name" value="Znr_NADH_PPase"/>
</dbReference>
<dbReference type="PANTHER" id="PTHR42904:SF6">
    <property type="entry name" value="NAD-CAPPED RNA HYDROLASE NUDT12"/>
    <property type="match status" value="1"/>
</dbReference>
<dbReference type="PANTHER" id="PTHR42904">
    <property type="entry name" value="NUDIX HYDROLASE, NUDC SUBFAMILY"/>
    <property type="match status" value="1"/>
</dbReference>
<dbReference type="Pfam" id="PF00293">
    <property type="entry name" value="NUDIX"/>
    <property type="match status" value="1"/>
</dbReference>
<dbReference type="Pfam" id="PF09297">
    <property type="entry name" value="Zn_ribbon_NUD"/>
    <property type="match status" value="1"/>
</dbReference>
<dbReference type="SUPFAM" id="SSF55811">
    <property type="entry name" value="Nudix"/>
    <property type="match status" value="1"/>
</dbReference>
<dbReference type="PROSITE" id="PS51462">
    <property type="entry name" value="NUDIX"/>
    <property type="match status" value="1"/>
</dbReference>
<dbReference type="PROSITE" id="PS00893">
    <property type="entry name" value="NUDIX_BOX"/>
    <property type="match status" value="1"/>
</dbReference>
<organism>
    <name type="scientific">Saccharomyces cerevisiae (strain ATCC 204508 / S288c)</name>
    <name type="common">Baker's yeast</name>
    <dbReference type="NCBI Taxonomy" id="559292"/>
    <lineage>
        <taxon>Eukaryota</taxon>
        <taxon>Fungi</taxon>
        <taxon>Dikarya</taxon>
        <taxon>Ascomycota</taxon>
        <taxon>Saccharomycotina</taxon>
        <taxon>Saccharomycetes</taxon>
        <taxon>Saccharomycetales</taxon>
        <taxon>Saccharomycetaceae</taxon>
        <taxon>Saccharomyces</taxon>
    </lineage>
</organism>
<evidence type="ECO:0000250" key="1">
    <source>
        <dbReference type="UniProtKB" id="Q9BQG2"/>
    </source>
</evidence>
<evidence type="ECO:0000250" key="2">
    <source>
        <dbReference type="UniProtKB" id="Q9DCN1"/>
    </source>
</evidence>
<evidence type="ECO:0000255" key="3">
    <source>
        <dbReference type="PROSITE-ProRule" id="PRU00794"/>
    </source>
</evidence>
<evidence type="ECO:0000269" key="4">
    <source>
    </source>
</evidence>
<evidence type="ECO:0000269" key="5">
    <source>
    </source>
</evidence>
<evidence type="ECO:0000303" key="6">
    <source>
    </source>
</evidence>
<evidence type="ECO:0000305" key="7"/>
<evidence type="ECO:0000312" key="8">
    <source>
        <dbReference type="SGD" id="S000003035"/>
    </source>
</evidence>
<sequence length="384" mass="43516">MSTAVTFFGQHVLNRVSFLRCSKEFIKKSLNHDSTVFIPFIEGEALISPENGDLVQLSNSVKSYKNILSAIVPLYTTLLNTTRSRSDESGINVTFLGLLEGTDSAFNFEWSNISYKGTPYFGLDIRVTESTLFKKVDFEPIFSYPKVTRDHIFKQTNEDASLYSQGKMYLDWLAKYKFCPGCGSPLFPVEAGTKLQCSNENRNVYCNVRDARINNVCFPRTDPTVIIALTNSDYSKCCLARSKKRYGDFVLYSTIAGFMEPSETIEEACIREIWEETGISCKNIDIVRSQPWPYPCSLMIGCLGIVQFNSKNEVINLNHDDELLDAQWFDTTEIIQALDKYAGGYRVPFKNDINLPGSTTIAFQLINHVCENYKNLRKTSSSHL</sequence>
<feature type="chain" id="PRO_0000056961" description="NAD-capped RNA hydrolase NPY1">
    <location>
        <begin position="1"/>
        <end position="384"/>
    </location>
</feature>
<feature type="domain" description="Nudix hydrolase" evidence="3">
    <location>
        <begin position="219"/>
        <end position="351"/>
    </location>
</feature>
<feature type="short sequence motif" description="Nudix box">
    <location>
        <begin position="257"/>
        <end position="278"/>
    </location>
</feature>
<feature type="short sequence motif" description="Microbody targeting signal" evidence="1">
    <location>
        <begin position="378"/>
        <end position="380"/>
    </location>
</feature>
<feature type="binding site" evidence="2">
    <location>
        <position position="179"/>
    </location>
    <ligand>
        <name>Zn(2+)</name>
        <dbReference type="ChEBI" id="CHEBI:29105"/>
    </ligand>
</feature>
<feature type="binding site" evidence="2">
    <location>
        <position position="182"/>
    </location>
    <ligand>
        <name>Zn(2+)</name>
        <dbReference type="ChEBI" id="CHEBI:29105"/>
    </ligand>
</feature>
<feature type="binding site" evidence="2">
    <location>
        <position position="197"/>
    </location>
    <ligand>
        <name>Zn(2+)</name>
        <dbReference type="ChEBI" id="CHEBI:29105"/>
    </ligand>
</feature>
<feature type="binding site" evidence="2">
    <location>
        <position position="206"/>
    </location>
    <ligand>
        <name>Zn(2+)</name>
        <dbReference type="ChEBI" id="CHEBI:29105"/>
    </ligand>
</feature>
<feature type="binding site" evidence="2">
    <location>
        <begin position="256"/>
        <end position="258"/>
    </location>
    <ligand>
        <name>substrate</name>
    </ligand>
</feature>
<feature type="binding site" evidence="2">
    <location>
        <position position="256"/>
    </location>
    <ligand>
        <name>Mg(2+)</name>
        <dbReference type="ChEBI" id="CHEBI:18420"/>
        <label>1</label>
    </ligand>
</feature>
<feature type="binding site" evidence="2">
    <location>
        <position position="272"/>
    </location>
    <ligand>
        <name>Mg(2+)</name>
        <dbReference type="ChEBI" id="CHEBI:18420"/>
        <label>2</label>
    </ligand>
</feature>
<feature type="binding site" evidence="2">
    <location>
        <position position="272"/>
    </location>
    <ligand>
        <name>Mg(2+)</name>
        <dbReference type="ChEBI" id="CHEBI:18420"/>
        <label>3</label>
    </ligand>
</feature>
<feature type="binding site" evidence="2">
    <location>
        <position position="272"/>
    </location>
    <ligand>
        <name>substrate</name>
    </ligand>
</feature>
<feature type="binding site" evidence="2">
    <location>
        <position position="276"/>
    </location>
    <ligand>
        <name>Mg(2+)</name>
        <dbReference type="ChEBI" id="CHEBI:18420"/>
        <label>1</label>
    </ligand>
</feature>
<feature type="binding site" evidence="2">
    <location>
        <position position="276"/>
    </location>
    <ligand>
        <name>Mg(2+)</name>
        <dbReference type="ChEBI" id="CHEBI:18420"/>
        <label>3</label>
    </ligand>
</feature>
<feature type="binding site" evidence="2">
    <location>
        <position position="276"/>
    </location>
    <ligand>
        <name>substrate</name>
    </ligand>
</feature>
<feature type="binding site" evidence="2">
    <location>
        <position position="322"/>
    </location>
    <ligand>
        <name>Mg(2+)</name>
        <dbReference type="ChEBI" id="CHEBI:18420"/>
        <label>1</label>
    </ligand>
</feature>
<feature type="binding site" evidence="2">
    <location>
        <position position="322"/>
    </location>
    <ligand>
        <name>Mg(2+)</name>
        <dbReference type="ChEBI" id="CHEBI:18420"/>
        <label>3</label>
    </ligand>
</feature>
<feature type="binding site" evidence="2">
    <location>
        <position position="322"/>
    </location>
    <ligand>
        <name>substrate</name>
    </ligand>
</feature>
<feature type="sequence conflict" description="In Ref. 3; AAT93207." evidence="7" ref="3">
    <original>E</original>
    <variation>D</variation>
    <location>
        <position position="44"/>
    </location>
</feature>
<protein>
    <recommendedName>
        <fullName evidence="7">NAD-capped RNA hydrolase NPY1</fullName>
        <shortName evidence="7">DeNADding enzyme NPY1</shortName>
        <ecNumber evidence="2">3.6.1.-</ecNumber>
    </recommendedName>
    <alternativeName>
        <fullName>NADH pyrophosphatase</fullName>
        <ecNumber evidence="4">3.6.1.22</ecNumber>
    </alternativeName>
</protein>
<comment type="function">
    <text evidence="2 4">mRNA decapping enzyme that specifically removes the nicotinamide adenine dinucleotide (NAD) cap from a subset of mRNAs by hydrolyzing the diphosphate linkage to produce nicotinamide mononucleotide (NMN) and 5' monophosphate mRNA. The NAD-cap is present at the 5'-end of some RNAs; in contrast to the canonical N7 methylguanosine (m7G) cap, the NAD cap promotes mRNA decay (By similarity). Mediates the hydrolysis of some nucleoside diphosphate derivatives (PubMed:11361135).</text>
</comment>
<comment type="catalytic activity">
    <reaction evidence="2">
        <text>a 5'-end NAD(+)-phospho-ribonucleoside in mRNA + H2O = a 5'-end phospho-adenosine-phospho-ribonucleoside in mRNA + beta-nicotinamide D-ribonucleotide + 2 H(+)</text>
        <dbReference type="Rhea" id="RHEA:60876"/>
        <dbReference type="Rhea" id="RHEA-COMP:15698"/>
        <dbReference type="Rhea" id="RHEA-COMP:15719"/>
        <dbReference type="ChEBI" id="CHEBI:14649"/>
        <dbReference type="ChEBI" id="CHEBI:15377"/>
        <dbReference type="ChEBI" id="CHEBI:15378"/>
        <dbReference type="ChEBI" id="CHEBI:144029"/>
        <dbReference type="ChEBI" id="CHEBI:144051"/>
    </reaction>
    <physiologicalReaction direction="left-to-right" evidence="2">
        <dbReference type="Rhea" id="RHEA:60877"/>
    </physiologicalReaction>
</comment>
<comment type="catalytic activity">
    <reaction evidence="4">
        <text>NAD(+) + H2O = beta-nicotinamide D-ribonucleotide + AMP + 2 H(+)</text>
        <dbReference type="Rhea" id="RHEA:11800"/>
        <dbReference type="ChEBI" id="CHEBI:14649"/>
        <dbReference type="ChEBI" id="CHEBI:15377"/>
        <dbReference type="ChEBI" id="CHEBI:15378"/>
        <dbReference type="ChEBI" id="CHEBI:57540"/>
        <dbReference type="ChEBI" id="CHEBI:456215"/>
        <dbReference type="EC" id="3.6.1.22"/>
    </reaction>
</comment>
<comment type="catalytic activity">
    <reaction evidence="4">
        <text>NADH + H2O = reduced beta-nicotinamide D-ribonucleotide + AMP + 2 H(+)</text>
        <dbReference type="Rhea" id="RHEA:48868"/>
        <dbReference type="ChEBI" id="CHEBI:15377"/>
        <dbReference type="ChEBI" id="CHEBI:15378"/>
        <dbReference type="ChEBI" id="CHEBI:57945"/>
        <dbReference type="ChEBI" id="CHEBI:90832"/>
        <dbReference type="ChEBI" id="CHEBI:456215"/>
        <dbReference type="EC" id="3.6.1.22"/>
    </reaction>
</comment>
<comment type="cofactor">
    <cofactor evidence="2">
        <name>Mg(2+)</name>
        <dbReference type="ChEBI" id="CHEBI:18420"/>
    </cofactor>
    <text evidence="2">Binds 3 Mg(2+) ions per subunit.</text>
</comment>
<comment type="cofactor">
    <cofactor evidence="2">
        <name>Zn(2+)</name>
        <dbReference type="ChEBI" id="CHEBI:29105"/>
    </cofactor>
    <text evidence="2">Binds 1 zinc ion per subunit.</text>
</comment>
<comment type="biophysicochemical properties">
    <kinetics>
        <KM evidence="4">0.17 mM for NADH</KM>
        <KM evidence="4">0.5 mM for NAD(+)</KM>
        <KM evidence="4">1.3 mM for ADP-ribose</KM>
        <Vmax evidence="4">2.0 umol/min/mg enzyme with NADH as substrate</Vmax>
        <Vmax evidence="4">0.85 umol/min/mg enzyme with NAD(+) as substrate</Vmax>
        <Vmax evidence="4">0.8 umol/min/mg enzyme with ADP-ribose as substrate</Vmax>
        <text evidence="4">kcat is 1.5 sec(-1) for NADH. kcat is 0.6 sec(-1) for NAD(+). kcat is 0.6 sec(-1) for ADP-ribose.</text>
    </kinetics>
</comment>
<comment type="subunit">
    <text>Homodimer.</text>
</comment>
<comment type="subcellular location">
    <subcellularLocation>
        <location evidence="4">Peroxisome</location>
    </subcellularLocation>
</comment>
<comment type="miscellaneous">
    <text evidence="5">Present with 846 molecules/cell in log phase SD medium.</text>
</comment>
<comment type="similarity">
    <text evidence="7">Belongs to the Nudix hydrolase family. NudC subfamily.</text>
</comment>
<proteinExistence type="evidence at protein level"/>
<gene>
    <name evidence="6 8" type="primary">NPY1</name>
    <name type="ordered locus">YGL067W</name>
</gene>
<name>NPY1_YEAST</name>
<keyword id="KW-0378">Hydrolase</keyword>
<keyword id="KW-0460">Magnesium</keyword>
<keyword id="KW-0479">Metal-binding</keyword>
<keyword id="KW-0520">NAD</keyword>
<keyword id="KW-0576">Peroxisome</keyword>
<keyword id="KW-1185">Reference proteome</keyword>
<keyword id="KW-0862">Zinc</keyword>
<accession>P53164</accession>
<accession>D6VU74</accession>
<accession>E9P928</accession>
<reference key="1">
    <citation type="journal article" date="1997" name="Nature">
        <title>The nucleotide sequence of Saccharomyces cerevisiae chromosome VII.</title>
        <authorList>
            <person name="Tettelin H."/>
            <person name="Agostoni-Carbone M.L."/>
            <person name="Albermann K."/>
            <person name="Albers M."/>
            <person name="Arroyo J."/>
            <person name="Backes U."/>
            <person name="Barreiros T."/>
            <person name="Bertani I."/>
            <person name="Bjourson A.J."/>
            <person name="Brueckner M."/>
            <person name="Bruschi C.V."/>
            <person name="Carignani G."/>
            <person name="Castagnoli L."/>
            <person name="Cerdan E."/>
            <person name="Clemente M.L."/>
            <person name="Coblenz A."/>
            <person name="Coglievina M."/>
            <person name="Coissac E."/>
            <person name="Defoor E."/>
            <person name="Del Bino S."/>
            <person name="Delius H."/>
            <person name="Delneri D."/>
            <person name="de Wergifosse P."/>
            <person name="Dujon B."/>
            <person name="Durand P."/>
            <person name="Entian K.-D."/>
            <person name="Eraso P."/>
            <person name="Escribano V."/>
            <person name="Fabiani L."/>
            <person name="Fartmann B."/>
            <person name="Feroli F."/>
            <person name="Feuermann M."/>
            <person name="Frontali L."/>
            <person name="Garcia-Gonzalez M."/>
            <person name="Garcia-Saez M.I."/>
            <person name="Goffeau A."/>
            <person name="Guerreiro P."/>
            <person name="Hani J."/>
            <person name="Hansen M."/>
            <person name="Hebling U."/>
            <person name="Hernandez K."/>
            <person name="Heumann K."/>
            <person name="Hilger F."/>
            <person name="Hofmann B."/>
            <person name="Indge K.J."/>
            <person name="James C.M."/>
            <person name="Klima R."/>
            <person name="Koetter P."/>
            <person name="Kramer B."/>
            <person name="Kramer W."/>
            <person name="Lauquin G."/>
            <person name="Leuther H."/>
            <person name="Louis E.J."/>
            <person name="Maillier E."/>
            <person name="Marconi A."/>
            <person name="Martegani E."/>
            <person name="Mazon M.J."/>
            <person name="Mazzoni C."/>
            <person name="McReynolds A.D.K."/>
            <person name="Melchioretto P."/>
            <person name="Mewes H.-W."/>
            <person name="Minenkova O."/>
            <person name="Mueller-Auer S."/>
            <person name="Nawrocki A."/>
            <person name="Netter P."/>
            <person name="Neu R."/>
            <person name="Nombela C."/>
            <person name="Oliver S.G."/>
            <person name="Panzeri L."/>
            <person name="Paoluzi S."/>
            <person name="Plevani P."/>
            <person name="Portetelle D."/>
            <person name="Portillo F."/>
            <person name="Potier S."/>
            <person name="Purnelle B."/>
            <person name="Rieger M."/>
            <person name="Riles L."/>
            <person name="Rinaldi T."/>
            <person name="Robben J."/>
            <person name="Rodrigues-Pousada C."/>
            <person name="Rodriguez-Belmonte E."/>
            <person name="Rodriguez-Torres A.M."/>
            <person name="Rose M."/>
            <person name="Ruzzi M."/>
            <person name="Saliola M."/>
            <person name="Sanchez-Perez M."/>
            <person name="Schaefer B."/>
            <person name="Schaefer M."/>
            <person name="Scharfe M."/>
            <person name="Schmidheini T."/>
            <person name="Schreer A."/>
            <person name="Skala J."/>
            <person name="Souciet J.-L."/>
            <person name="Steensma H.Y."/>
            <person name="Talla E."/>
            <person name="Thierry A."/>
            <person name="Vandenbol M."/>
            <person name="van der Aart Q.J.M."/>
            <person name="Van Dyck L."/>
            <person name="Vanoni M."/>
            <person name="Verhasselt P."/>
            <person name="Voet M."/>
            <person name="Volckaert G."/>
            <person name="Wambutt R."/>
            <person name="Watson M.D."/>
            <person name="Weber N."/>
            <person name="Wedler E."/>
            <person name="Wedler H."/>
            <person name="Wipfli P."/>
            <person name="Wolf K."/>
            <person name="Wright L.F."/>
            <person name="Zaccaria P."/>
            <person name="Zimmermann M."/>
            <person name="Zollner A."/>
            <person name="Kleine K."/>
        </authorList>
    </citation>
    <scope>NUCLEOTIDE SEQUENCE [LARGE SCALE GENOMIC DNA]</scope>
    <source>
        <strain>ATCC 204508 / S288c</strain>
    </source>
</reference>
<reference key="2">
    <citation type="journal article" date="2014" name="G3 (Bethesda)">
        <title>The reference genome sequence of Saccharomyces cerevisiae: Then and now.</title>
        <authorList>
            <person name="Engel S.R."/>
            <person name="Dietrich F.S."/>
            <person name="Fisk D.G."/>
            <person name="Binkley G."/>
            <person name="Balakrishnan R."/>
            <person name="Costanzo M.C."/>
            <person name="Dwight S.S."/>
            <person name="Hitz B.C."/>
            <person name="Karra K."/>
            <person name="Nash R.S."/>
            <person name="Weng S."/>
            <person name="Wong E.D."/>
            <person name="Lloyd P."/>
            <person name="Skrzypek M.S."/>
            <person name="Miyasato S.R."/>
            <person name="Simison M."/>
            <person name="Cherry J.M."/>
        </authorList>
    </citation>
    <scope>GENOME REANNOTATION</scope>
    <source>
        <strain>ATCC 204508 / S288c</strain>
    </source>
</reference>
<reference key="3">
    <citation type="journal article" date="2007" name="Genome Res.">
        <title>Approaching a complete repository of sequence-verified protein-encoding clones for Saccharomyces cerevisiae.</title>
        <authorList>
            <person name="Hu Y."/>
            <person name="Rolfs A."/>
            <person name="Bhullar B."/>
            <person name="Murthy T.V.S."/>
            <person name="Zhu C."/>
            <person name="Berger M.F."/>
            <person name="Camargo A.A."/>
            <person name="Kelley F."/>
            <person name="McCarron S."/>
            <person name="Jepson D."/>
            <person name="Richardson A."/>
            <person name="Raphael J."/>
            <person name="Moreira D."/>
            <person name="Taycher E."/>
            <person name="Zuo D."/>
            <person name="Mohr S."/>
            <person name="Kane M.F."/>
            <person name="Williamson J."/>
            <person name="Simpson A.J.G."/>
            <person name="Bulyk M.L."/>
            <person name="Harlow E."/>
            <person name="Marsischky G."/>
            <person name="Kolodner R.D."/>
            <person name="LaBaer J."/>
        </authorList>
    </citation>
    <scope>NUCLEOTIDE SEQUENCE [GENOMIC DNA]</scope>
    <source>
        <strain>ATCC 204508 / S288c</strain>
    </source>
</reference>
<reference key="4">
    <citation type="journal article" date="2000" name="Biochem. Biophys. Res. Commun.">
        <title>Cloning and characterization of the NADH pyrophosphatases from Caenorhabditis elegans and Saccharomyces cerevisiae, members of a Nudix hydrolase subfamily.</title>
        <authorList>
            <person name="Xu W."/>
            <person name="Dunn C.A."/>
            <person name="Bessman M.J."/>
        </authorList>
    </citation>
    <scope>CHARACTERIZATION</scope>
</reference>
<reference key="5">
    <citation type="journal article" date="2001" name="Arch. Biochem. Biophys.">
        <title>The NADH diphosphatase encoded by the Saccharomyces cerevisiae NPY1 nudix hydrolase gene is located in peroxisomes.</title>
        <authorList>
            <person name="AbdelRaheim S.R."/>
            <person name="Cartwright J.L."/>
            <person name="Gasmi L."/>
            <person name="McLennan A.G."/>
        </authorList>
    </citation>
    <scope>FUNCTION</scope>
    <scope>CATALYTIC ACTIVITY</scope>
    <scope>BIOPHYSICOCHEMICAL PROPERTIES</scope>
    <scope>SUBCELLULAR LOCATION</scope>
</reference>
<reference key="6">
    <citation type="journal article" date="2003" name="Nature">
        <title>Global analysis of protein expression in yeast.</title>
        <authorList>
            <person name="Ghaemmaghami S."/>
            <person name="Huh W.-K."/>
            <person name="Bower K."/>
            <person name="Howson R.W."/>
            <person name="Belle A."/>
            <person name="Dephoure N."/>
            <person name="O'Shea E.K."/>
            <person name="Weissman J.S."/>
        </authorList>
    </citation>
    <scope>LEVEL OF PROTEIN EXPRESSION [LARGE SCALE ANALYSIS]</scope>
</reference>